<proteinExistence type="inferred from homology"/>
<sequence length="278" mass="30199">MGERFIKMHGLGNDFVVLDHLESPRELSPQEARFWADRRRGVGCDQVVQLLPGVEGGDAQMRIYNPDGSRAEMCGNAMRCVGLYLHEQRGMAAALAVETLAGIMRPQVTSALAITVDMGRPQWAGRAIPLDQDGEMIDAPLEVGGQSYRMTALSMGNPHGVVRVADAEGFELAKVGPLVEHHALFPNRINFEVVQVLSRSRIRMRVWERGAGITPACGTGACAAAVACMRQGWVERDCTVVLDGGELQIVWLESDRVMMSGPATEVFRGELVGLPAGF</sequence>
<organism>
    <name type="scientific">Magnetococcus marinus (strain ATCC BAA-1437 / JCM 17883 / MC-1)</name>
    <dbReference type="NCBI Taxonomy" id="156889"/>
    <lineage>
        <taxon>Bacteria</taxon>
        <taxon>Pseudomonadati</taxon>
        <taxon>Pseudomonadota</taxon>
        <taxon>Alphaproteobacteria</taxon>
        <taxon>Magnetococcales</taxon>
        <taxon>Magnetococcaceae</taxon>
        <taxon>Magnetococcus</taxon>
    </lineage>
</organism>
<comment type="function">
    <text evidence="1">Catalyzes the stereoinversion of LL-2,6-diaminopimelate (L,L-DAP) to meso-diaminopimelate (meso-DAP), a precursor of L-lysine and an essential component of the bacterial peptidoglycan.</text>
</comment>
<comment type="catalytic activity">
    <reaction evidence="1">
        <text>(2S,6S)-2,6-diaminopimelate = meso-2,6-diaminopimelate</text>
        <dbReference type="Rhea" id="RHEA:15393"/>
        <dbReference type="ChEBI" id="CHEBI:57609"/>
        <dbReference type="ChEBI" id="CHEBI:57791"/>
        <dbReference type="EC" id="5.1.1.7"/>
    </reaction>
</comment>
<comment type="pathway">
    <text evidence="1">Amino-acid biosynthesis; L-lysine biosynthesis via DAP pathway; DL-2,6-diaminopimelate from LL-2,6-diaminopimelate: step 1/1.</text>
</comment>
<comment type="subunit">
    <text evidence="1">Homodimer.</text>
</comment>
<comment type="subcellular location">
    <subcellularLocation>
        <location evidence="1">Cytoplasm</location>
    </subcellularLocation>
</comment>
<comment type="similarity">
    <text evidence="1">Belongs to the diaminopimelate epimerase family.</text>
</comment>
<reference key="1">
    <citation type="journal article" date="2009" name="Appl. Environ. Microbiol.">
        <title>Complete genome sequence of the chemolithoautotrophic marine magnetotactic coccus strain MC-1.</title>
        <authorList>
            <person name="Schubbe S."/>
            <person name="Williams T.J."/>
            <person name="Xie G."/>
            <person name="Kiss H.E."/>
            <person name="Brettin T.S."/>
            <person name="Martinez D."/>
            <person name="Ross C.A."/>
            <person name="Schuler D."/>
            <person name="Cox B.L."/>
            <person name="Nealson K.H."/>
            <person name="Bazylinski D.A."/>
        </authorList>
    </citation>
    <scope>NUCLEOTIDE SEQUENCE [LARGE SCALE GENOMIC DNA]</scope>
    <source>
        <strain>ATCC BAA-1437 / JCM 17883 / MC-1</strain>
    </source>
</reference>
<gene>
    <name evidence="1" type="primary">dapF</name>
    <name type="ordered locus">Mmc1_3739</name>
</gene>
<keyword id="KW-0028">Amino-acid biosynthesis</keyword>
<keyword id="KW-0963">Cytoplasm</keyword>
<keyword id="KW-0413">Isomerase</keyword>
<keyword id="KW-0457">Lysine biosynthesis</keyword>
<keyword id="KW-1185">Reference proteome</keyword>
<evidence type="ECO:0000255" key="1">
    <source>
        <dbReference type="HAMAP-Rule" id="MF_00197"/>
    </source>
</evidence>
<dbReference type="EC" id="5.1.1.7" evidence="1"/>
<dbReference type="EMBL" id="CP000471">
    <property type="protein sequence ID" value="ABK46224.1"/>
    <property type="molecule type" value="Genomic_DNA"/>
</dbReference>
<dbReference type="RefSeq" id="WP_011715276.1">
    <property type="nucleotide sequence ID" value="NC_008576.1"/>
</dbReference>
<dbReference type="SMR" id="A0LE31"/>
<dbReference type="STRING" id="156889.Mmc1_3739"/>
<dbReference type="KEGG" id="mgm:Mmc1_3739"/>
<dbReference type="eggNOG" id="COG0253">
    <property type="taxonomic scope" value="Bacteria"/>
</dbReference>
<dbReference type="HOGENOM" id="CLU_053306_1_0_5"/>
<dbReference type="UniPathway" id="UPA00034">
    <property type="reaction ID" value="UER00025"/>
</dbReference>
<dbReference type="Proteomes" id="UP000002586">
    <property type="component" value="Chromosome"/>
</dbReference>
<dbReference type="GO" id="GO:0005829">
    <property type="term" value="C:cytosol"/>
    <property type="evidence" value="ECO:0007669"/>
    <property type="project" value="TreeGrafter"/>
</dbReference>
<dbReference type="GO" id="GO:0008837">
    <property type="term" value="F:diaminopimelate epimerase activity"/>
    <property type="evidence" value="ECO:0007669"/>
    <property type="project" value="UniProtKB-UniRule"/>
</dbReference>
<dbReference type="GO" id="GO:0009089">
    <property type="term" value="P:lysine biosynthetic process via diaminopimelate"/>
    <property type="evidence" value="ECO:0007669"/>
    <property type="project" value="UniProtKB-UniRule"/>
</dbReference>
<dbReference type="Gene3D" id="3.10.310.10">
    <property type="entry name" value="Diaminopimelate Epimerase, Chain A, domain 1"/>
    <property type="match status" value="2"/>
</dbReference>
<dbReference type="HAMAP" id="MF_00197">
    <property type="entry name" value="DAP_epimerase"/>
    <property type="match status" value="1"/>
</dbReference>
<dbReference type="InterPro" id="IPR018510">
    <property type="entry name" value="DAP_epimerase_AS"/>
</dbReference>
<dbReference type="InterPro" id="IPR001653">
    <property type="entry name" value="DAP_epimerase_DapF"/>
</dbReference>
<dbReference type="NCBIfam" id="TIGR00652">
    <property type="entry name" value="DapF"/>
    <property type="match status" value="1"/>
</dbReference>
<dbReference type="PANTHER" id="PTHR31689:SF0">
    <property type="entry name" value="DIAMINOPIMELATE EPIMERASE"/>
    <property type="match status" value="1"/>
</dbReference>
<dbReference type="PANTHER" id="PTHR31689">
    <property type="entry name" value="DIAMINOPIMELATE EPIMERASE, CHLOROPLASTIC"/>
    <property type="match status" value="1"/>
</dbReference>
<dbReference type="Pfam" id="PF01678">
    <property type="entry name" value="DAP_epimerase"/>
    <property type="match status" value="2"/>
</dbReference>
<dbReference type="SUPFAM" id="SSF54506">
    <property type="entry name" value="Diaminopimelate epimerase-like"/>
    <property type="match status" value="2"/>
</dbReference>
<dbReference type="PROSITE" id="PS01326">
    <property type="entry name" value="DAP_EPIMERASE"/>
    <property type="match status" value="1"/>
</dbReference>
<protein>
    <recommendedName>
        <fullName evidence="1">Diaminopimelate epimerase</fullName>
        <shortName evidence="1">DAP epimerase</shortName>
        <ecNumber evidence="1">5.1.1.7</ecNumber>
    </recommendedName>
    <alternativeName>
        <fullName evidence="1">PLP-independent amino acid racemase</fullName>
    </alternativeName>
</protein>
<accession>A0LE31</accession>
<name>DAPF_MAGMM</name>
<feature type="chain" id="PRO_1000011900" description="Diaminopimelate epimerase">
    <location>
        <begin position="1"/>
        <end position="278"/>
    </location>
</feature>
<feature type="active site" description="Proton donor" evidence="1">
    <location>
        <position position="74"/>
    </location>
</feature>
<feature type="active site" description="Proton acceptor" evidence="1">
    <location>
        <position position="217"/>
    </location>
</feature>
<feature type="binding site" evidence="1">
    <location>
        <position position="13"/>
    </location>
    <ligand>
        <name>substrate</name>
    </ligand>
</feature>
<feature type="binding site" evidence="1">
    <location>
        <position position="46"/>
    </location>
    <ligand>
        <name>substrate</name>
    </ligand>
</feature>
<feature type="binding site" evidence="1">
    <location>
        <position position="65"/>
    </location>
    <ligand>
        <name>substrate</name>
    </ligand>
</feature>
<feature type="binding site" evidence="1">
    <location>
        <begin position="75"/>
        <end position="76"/>
    </location>
    <ligand>
        <name>substrate</name>
    </ligand>
</feature>
<feature type="binding site" evidence="1">
    <location>
        <position position="157"/>
    </location>
    <ligand>
        <name>substrate</name>
    </ligand>
</feature>
<feature type="binding site" evidence="1">
    <location>
        <position position="190"/>
    </location>
    <ligand>
        <name>substrate</name>
    </ligand>
</feature>
<feature type="binding site" evidence="1">
    <location>
        <begin position="208"/>
        <end position="209"/>
    </location>
    <ligand>
        <name>substrate</name>
    </ligand>
</feature>
<feature type="binding site" evidence="1">
    <location>
        <begin position="218"/>
        <end position="219"/>
    </location>
    <ligand>
        <name>substrate</name>
    </ligand>
</feature>
<feature type="site" description="Could be important to modulate the pK values of the two catalytic cysteine residues" evidence="1">
    <location>
        <position position="159"/>
    </location>
</feature>
<feature type="site" description="Could be important to modulate the pK values of the two catalytic cysteine residues" evidence="1">
    <location>
        <position position="208"/>
    </location>
</feature>